<organism>
    <name type="scientific">Homo sapiens</name>
    <name type="common">Human</name>
    <dbReference type="NCBI Taxonomy" id="9606"/>
    <lineage>
        <taxon>Eukaryota</taxon>
        <taxon>Metazoa</taxon>
        <taxon>Chordata</taxon>
        <taxon>Craniata</taxon>
        <taxon>Vertebrata</taxon>
        <taxon>Euteleostomi</taxon>
        <taxon>Mammalia</taxon>
        <taxon>Eutheria</taxon>
        <taxon>Euarchontoglires</taxon>
        <taxon>Primates</taxon>
        <taxon>Haplorrhini</taxon>
        <taxon>Catarrhini</taxon>
        <taxon>Hominidae</taxon>
        <taxon>Homo</taxon>
    </lineage>
</organism>
<comment type="function">
    <text evidence="6">Initiates complex N-linked carbohydrate formation. Essential for the conversion of high-mannose to hybrid and complex N-glycans.</text>
</comment>
<comment type="catalytic activity">
    <reaction evidence="6">
        <text>N(4)-(alpha-D-Man-(1-&gt;3)-[alpha-D-Man-(1-&gt;3)-[alpha-D-Man-(1-&gt;6)]-alpha-D-Man-(1-&gt;6)]-beta-D-Man-(1-&gt;4)-beta-D-GlcNAc-(1-&gt;4)-beta-D-GlcNAc)-L-asparaginyl-[protein] (N-glucan mannose isomer 5A1,2) + UDP-N-acetyl-alpha-D-glucosamine = N(4)-{beta-D-GlcNAc-(1-&gt;2)-alpha-D-Man-(1-&gt;3)-[alpha-D-Man-(1-&gt;3)-[alpha-D-Man-(1-&gt;6)]-alpha-D-Man-(1-&gt;6)]-beta-D-Man-(1-&gt;4)-beta-D-GlcNAc-(1-&gt;4)-beta-D-GlcNAc}-L-asparaginyl-[protein] + UDP + H(+)</text>
        <dbReference type="Rhea" id="RHEA:11456"/>
        <dbReference type="Rhea" id="RHEA-COMP:14367"/>
        <dbReference type="Rhea" id="RHEA-COMP:14368"/>
        <dbReference type="ChEBI" id="CHEBI:15378"/>
        <dbReference type="ChEBI" id="CHEBI:57705"/>
        <dbReference type="ChEBI" id="CHEBI:58223"/>
        <dbReference type="ChEBI" id="CHEBI:59087"/>
        <dbReference type="ChEBI" id="CHEBI:60625"/>
        <dbReference type="EC" id="2.4.1.101"/>
    </reaction>
</comment>
<comment type="cofactor">
    <cofactor evidence="6">
        <name>Mn(2+)</name>
        <dbReference type="ChEBI" id="CHEBI:29035"/>
    </cofactor>
    <text evidence="1">The cofactor is mostly bound to the substrate.</text>
</comment>
<comment type="pathway">
    <text evidence="6">Protein modification; protein glycosylation.</text>
</comment>
<comment type="subunit">
    <text evidence="2 9">Interacts with MGAT4D. Interacts with BRI3 (isoforms 1 and 2); the interaction with isoform 2 is weaker than with isoform 1 (PubMed:30983867).</text>
</comment>
<comment type="interaction">
    <interactant intactId="EBI-7211952">
        <id>P26572</id>
    </interactant>
    <interactant intactId="EBI-2874789">
        <id>O95415</id>
        <label>BRI3</label>
    </interactant>
    <organismsDiffer>false</organismsDiffer>
    <experiments>6</experiments>
</comment>
<comment type="subcellular location">
    <subcellularLocation>
        <location evidence="8">Golgi apparatus membrane</location>
        <topology evidence="12">Single-pass type II membrane protein</topology>
    </subcellularLocation>
    <subcellularLocation>
        <location evidence="9">Cytoplasm</location>
        <location evidence="9">Perinuclear region</location>
    </subcellularLocation>
    <text evidence="9">Co-localizes with BRI3 isoform 1 at the perinuclear region.</text>
</comment>
<comment type="similarity">
    <text evidence="12">Belongs to the glycosyltransferase 13 family.</text>
</comment>
<comment type="online information" name="Functional Glycomics Gateway - GTase">
    <link uri="http://www.functionalglycomics.org/glycomics/molecule/jsp/glycoEnzyme/viewGlycoEnzyme.jsp?gbpId=gt_hum_535"/>
    <text>Alpha-1,3-mannosyl-glycoprotein 2-beta-N-acetylglucosaminyltransferase</text>
</comment>
<keyword id="KW-0963">Cytoplasm</keyword>
<keyword id="KW-1015">Disulfide bond</keyword>
<keyword id="KW-0328">Glycosyltransferase</keyword>
<keyword id="KW-0333">Golgi apparatus</keyword>
<keyword id="KW-0464">Manganese</keyword>
<keyword id="KW-0472">Membrane</keyword>
<keyword id="KW-0479">Metal-binding</keyword>
<keyword id="KW-1267">Proteomics identification</keyword>
<keyword id="KW-1185">Reference proteome</keyword>
<keyword id="KW-0735">Signal-anchor</keyword>
<keyword id="KW-0808">Transferase</keyword>
<keyword id="KW-0812">Transmembrane</keyword>
<keyword id="KW-1133">Transmembrane helix</keyword>
<feature type="chain" id="PRO_0000191384" description="Alpha-1,3-mannosyl-glycoprotein 2-beta-N-acetylglucosaminyltransferase">
    <location>
        <begin position="1"/>
        <end position="445"/>
    </location>
</feature>
<feature type="topological domain" description="Cytoplasmic" evidence="3">
    <location>
        <begin position="1"/>
        <end position="6"/>
    </location>
</feature>
<feature type="transmembrane region" description="Helical; Signal-anchor for type II membrane protein" evidence="3">
    <location>
        <begin position="7"/>
        <end position="29"/>
    </location>
</feature>
<feature type="topological domain" description="Lumenal" evidence="3">
    <location>
        <begin position="30"/>
        <end position="445"/>
    </location>
</feature>
<feature type="active site" description="Proton acceptor" evidence="3">
    <location>
        <position position="289"/>
    </location>
</feature>
<feature type="binding site" evidence="1">
    <location>
        <position position="115"/>
    </location>
    <ligand>
        <name>substrate</name>
    </ligand>
</feature>
<feature type="binding site" evidence="1">
    <location>
        <position position="142"/>
    </location>
    <ligand>
        <name>substrate</name>
    </ligand>
</feature>
<feature type="binding site" evidence="1">
    <location>
        <position position="188"/>
    </location>
    <ligand>
        <name>substrate</name>
    </ligand>
</feature>
<feature type="binding site" evidence="1">
    <location>
        <position position="210"/>
    </location>
    <ligand>
        <name>substrate</name>
    </ligand>
</feature>
<feature type="binding site" evidence="1">
    <location>
        <position position="211"/>
    </location>
    <ligand>
        <name>Mn(2+)</name>
        <dbReference type="ChEBI" id="CHEBI:29035"/>
    </ligand>
</feature>
<feature type="binding site" evidence="1">
    <location>
        <position position="320"/>
    </location>
    <ligand>
        <name>substrate</name>
    </ligand>
</feature>
<feature type="disulfide bond" evidence="1">
    <location>
        <begin position="113"/>
        <end position="143"/>
    </location>
</feature>
<feature type="disulfide bond" evidence="1">
    <location>
        <begin position="237"/>
        <end position="303"/>
    </location>
</feature>
<feature type="sequence variant" id="VAR_028272" description="In dbSNP:rs7726005.">
    <original>R</original>
    <variation>Q</variation>
    <location>
        <position position="223"/>
    </location>
</feature>
<feature type="sequence variant" id="VAR_028273" description="In dbSNP:rs634501." evidence="4 5 7 10">
    <original>L</original>
    <variation>P</variation>
    <location>
        <position position="435"/>
    </location>
</feature>
<feature type="sequence conflict" description="In Ref. 3; BAG52510." evidence="12" ref="3">
    <original>W</original>
    <variation>R</variation>
    <location>
        <position position="291"/>
    </location>
</feature>
<accession>P26572</accession>
<accession>A8K404</accession>
<accession>B3KRU8</accession>
<accession>D3DWR1</accession>
<accession>Q6IBE3</accession>
<sequence>MLKKQSAGLVLWGAILFVAWNALLLLFFWTRPAPGRPPSVSALDGDPASLTREVIRLAQDAEVELERQRGLLQQIGDALSSQRGRVPTAAPPAQPRVPVTPAPAVIPILVIACDRSTVRRCLDKLLHYRPSAELFPIIVSQDCGHEETAQAIASYGSAVTHIRQPDLSSIAVPPDHRKFQGYYKIARHYRWALGQVFRQFRFPAAVVVEDDLEVAPDFFEYFRATYPLLKADPSLWCVSAWNDNGKEQMVDASRPELLYRTDFFPGLGWLLLAELWAELEPKWPKAFWDDWMRRPEQRQGRACIRPEISRTMTFGRKGVSHGQFFDQHLKFIKLNQQFVHFTQLDLSYLQREAYDRDFLARVYGAPQLQVEKVRTNDRKELGEVRVQYTGRDSFKAFAKALGVMDDLKSGVPRAGYRGIVTFQFRGRRVHLAPPLTWEGYDPSWN</sequence>
<evidence type="ECO:0000250" key="1">
    <source>
        <dbReference type="UniProtKB" id="P27115"/>
    </source>
</evidence>
<evidence type="ECO:0000250" key="2">
    <source>
        <dbReference type="UniProtKB" id="P27808"/>
    </source>
</evidence>
<evidence type="ECO:0000255" key="3"/>
<evidence type="ECO:0000269" key="4">
    <source>
    </source>
</evidence>
<evidence type="ECO:0000269" key="5">
    <source>
    </source>
</evidence>
<evidence type="ECO:0000269" key="6">
    <source>
    </source>
</evidence>
<evidence type="ECO:0000269" key="7">
    <source>
    </source>
</evidence>
<evidence type="ECO:0000269" key="8">
    <source>
    </source>
</evidence>
<evidence type="ECO:0000269" key="9">
    <source>
    </source>
</evidence>
<evidence type="ECO:0000269" key="10">
    <source ref="4"/>
</evidence>
<evidence type="ECO:0000303" key="11">
    <source>
    </source>
</evidence>
<evidence type="ECO:0000305" key="12"/>
<proteinExistence type="evidence at protein level"/>
<reference key="1">
    <citation type="journal article" date="1990" name="Proc. Natl. Acad. Sci. U.S.A.">
        <title>Cloning and expression of N-acetylglucosaminyltransferase I, the medial Golgi transferase that initiates complex N-linked carbohydrate formation.</title>
        <authorList>
            <person name="Kumar R."/>
            <person name="Yang J."/>
            <person name="Larsen R.D."/>
            <person name="Stanley P."/>
        </authorList>
    </citation>
    <scope>NUCLEOTIDE SEQUENCE [MRNA]</scope>
    <scope>FUNCTION</scope>
    <scope>CATALYTIC ACTIVITY</scope>
    <scope>PATHWAY</scope>
    <scope>COFACTOR</scope>
</reference>
<reference key="2">
    <citation type="journal article" date="1991" name="Biochem. Biophys. Res. Commun.">
        <title>Organization and localization to chromosome 5 of the human UDP-N-acetylglucosamine:alpha-3-D-mannoside beta-1,2-N-acetylglucosaminyltransferase I gene.</title>
        <authorList>
            <person name="Hull E."/>
            <person name="Sarkar M."/>
            <person name="Spruijt M.P.N."/>
            <person name="Hoeppener J.W.M."/>
            <person name="Dunn R."/>
            <person name="Schachter H."/>
        </authorList>
    </citation>
    <scope>NUCLEOTIDE SEQUENCE [GENOMIC DNA]</scope>
    <scope>VARIANT PRO-435</scope>
    <source>
        <tissue>Myeloid leukemia cell</tissue>
    </source>
</reference>
<reference key="3">
    <citation type="journal article" date="2004" name="Nat. Genet.">
        <title>Complete sequencing and characterization of 21,243 full-length human cDNAs.</title>
        <authorList>
            <person name="Ota T."/>
            <person name="Suzuki Y."/>
            <person name="Nishikawa T."/>
            <person name="Otsuki T."/>
            <person name="Sugiyama T."/>
            <person name="Irie R."/>
            <person name="Wakamatsu A."/>
            <person name="Hayashi K."/>
            <person name="Sato H."/>
            <person name="Nagai K."/>
            <person name="Kimura K."/>
            <person name="Makita H."/>
            <person name="Sekine M."/>
            <person name="Obayashi M."/>
            <person name="Nishi T."/>
            <person name="Shibahara T."/>
            <person name="Tanaka T."/>
            <person name="Ishii S."/>
            <person name="Yamamoto J."/>
            <person name="Saito K."/>
            <person name="Kawai Y."/>
            <person name="Isono Y."/>
            <person name="Nakamura Y."/>
            <person name="Nagahari K."/>
            <person name="Murakami K."/>
            <person name="Yasuda T."/>
            <person name="Iwayanagi T."/>
            <person name="Wagatsuma M."/>
            <person name="Shiratori A."/>
            <person name="Sudo H."/>
            <person name="Hosoiri T."/>
            <person name="Kaku Y."/>
            <person name="Kodaira H."/>
            <person name="Kondo H."/>
            <person name="Sugawara M."/>
            <person name="Takahashi M."/>
            <person name="Kanda K."/>
            <person name="Yokoi T."/>
            <person name="Furuya T."/>
            <person name="Kikkawa E."/>
            <person name="Omura Y."/>
            <person name="Abe K."/>
            <person name="Kamihara K."/>
            <person name="Katsuta N."/>
            <person name="Sato K."/>
            <person name="Tanikawa M."/>
            <person name="Yamazaki M."/>
            <person name="Ninomiya K."/>
            <person name="Ishibashi T."/>
            <person name="Yamashita H."/>
            <person name="Murakawa K."/>
            <person name="Fujimori K."/>
            <person name="Tanai H."/>
            <person name="Kimata M."/>
            <person name="Watanabe M."/>
            <person name="Hiraoka S."/>
            <person name="Chiba Y."/>
            <person name="Ishida S."/>
            <person name="Ono Y."/>
            <person name="Takiguchi S."/>
            <person name="Watanabe S."/>
            <person name="Yosida M."/>
            <person name="Hotuta T."/>
            <person name="Kusano J."/>
            <person name="Kanehori K."/>
            <person name="Takahashi-Fujii A."/>
            <person name="Hara H."/>
            <person name="Tanase T.-O."/>
            <person name="Nomura Y."/>
            <person name="Togiya S."/>
            <person name="Komai F."/>
            <person name="Hara R."/>
            <person name="Takeuchi K."/>
            <person name="Arita M."/>
            <person name="Imose N."/>
            <person name="Musashino K."/>
            <person name="Yuuki H."/>
            <person name="Oshima A."/>
            <person name="Sasaki N."/>
            <person name="Aotsuka S."/>
            <person name="Yoshikawa Y."/>
            <person name="Matsunawa H."/>
            <person name="Ichihara T."/>
            <person name="Shiohata N."/>
            <person name="Sano S."/>
            <person name="Moriya S."/>
            <person name="Momiyama H."/>
            <person name="Satoh N."/>
            <person name="Takami S."/>
            <person name="Terashima Y."/>
            <person name="Suzuki O."/>
            <person name="Nakagawa S."/>
            <person name="Senoh A."/>
            <person name="Mizoguchi H."/>
            <person name="Goto Y."/>
            <person name="Shimizu F."/>
            <person name="Wakebe H."/>
            <person name="Hishigaki H."/>
            <person name="Watanabe T."/>
            <person name="Sugiyama A."/>
            <person name="Takemoto M."/>
            <person name="Kawakami B."/>
            <person name="Yamazaki M."/>
            <person name="Watanabe K."/>
            <person name="Kumagai A."/>
            <person name="Itakura S."/>
            <person name="Fukuzumi Y."/>
            <person name="Fujimori Y."/>
            <person name="Komiyama M."/>
            <person name="Tashiro H."/>
            <person name="Tanigami A."/>
            <person name="Fujiwara T."/>
            <person name="Ono T."/>
            <person name="Yamada K."/>
            <person name="Fujii Y."/>
            <person name="Ozaki K."/>
            <person name="Hirao M."/>
            <person name="Ohmori Y."/>
            <person name="Kawabata A."/>
            <person name="Hikiji T."/>
            <person name="Kobatake N."/>
            <person name="Inagaki H."/>
            <person name="Ikema Y."/>
            <person name="Okamoto S."/>
            <person name="Okitani R."/>
            <person name="Kawakami T."/>
            <person name="Noguchi S."/>
            <person name="Itoh T."/>
            <person name="Shigeta K."/>
            <person name="Senba T."/>
            <person name="Matsumura K."/>
            <person name="Nakajima Y."/>
            <person name="Mizuno T."/>
            <person name="Morinaga M."/>
            <person name="Sasaki M."/>
            <person name="Togashi T."/>
            <person name="Oyama M."/>
            <person name="Hata H."/>
            <person name="Watanabe M."/>
            <person name="Komatsu T."/>
            <person name="Mizushima-Sugano J."/>
            <person name="Satoh T."/>
            <person name="Shirai Y."/>
            <person name="Takahashi Y."/>
            <person name="Nakagawa K."/>
            <person name="Okumura K."/>
            <person name="Nagase T."/>
            <person name="Nomura N."/>
            <person name="Kikuchi H."/>
            <person name="Masuho Y."/>
            <person name="Yamashita R."/>
            <person name="Nakai K."/>
            <person name="Yada T."/>
            <person name="Nakamura Y."/>
            <person name="Ohara O."/>
            <person name="Isogai T."/>
            <person name="Sugano S."/>
        </authorList>
    </citation>
    <scope>NUCLEOTIDE SEQUENCE [LARGE SCALE MRNA]</scope>
    <scope>VARIANT PRO-435</scope>
</reference>
<reference key="4">
    <citation type="submission" date="2004-06" db="EMBL/GenBank/DDBJ databases">
        <title>Cloning of human full open reading frames in Gateway(TM) system entry vector (pDONR201).</title>
        <authorList>
            <person name="Ebert L."/>
            <person name="Schick M."/>
            <person name="Neubert P."/>
            <person name="Schatten R."/>
            <person name="Henze S."/>
            <person name="Korn B."/>
        </authorList>
    </citation>
    <scope>NUCLEOTIDE SEQUENCE [LARGE SCALE MRNA]</scope>
    <scope>VARIANT PRO-435</scope>
</reference>
<reference key="5">
    <citation type="journal article" date="2004" name="Nature">
        <title>The DNA sequence and comparative analysis of human chromosome 5.</title>
        <authorList>
            <person name="Schmutz J."/>
            <person name="Martin J."/>
            <person name="Terry A."/>
            <person name="Couronne O."/>
            <person name="Grimwood J."/>
            <person name="Lowry S."/>
            <person name="Gordon L.A."/>
            <person name="Scott D."/>
            <person name="Xie G."/>
            <person name="Huang W."/>
            <person name="Hellsten U."/>
            <person name="Tran-Gyamfi M."/>
            <person name="She X."/>
            <person name="Prabhakar S."/>
            <person name="Aerts A."/>
            <person name="Altherr M."/>
            <person name="Bajorek E."/>
            <person name="Black S."/>
            <person name="Branscomb E."/>
            <person name="Caoile C."/>
            <person name="Challacombe J.F."/>
            <person name="Chan Y.M."/>
            <person name="Denys M."/>
            <person name="Detter J.C."/>
            <person name="Escobar J."/>
            <person name="Flowers D."/>
            <person name="Fotopulos D."/>
            <person name="Glavina T."/>
            <person name="Gomez M."/>
            <person name="Gonzales E."/>
            <person name="Goodstein D."/>
            <person name="Grigoriev I."/>
            <person name="Groza M."/>
            <person name="Hammon N."/>
            <person name="Hawkins T."/>
            <person name="Haydu L."/>
            <person name="Israni S."/>
            <person name="Jett J."/>
            <person name="Kadner K."/>
            <person name="Kimball H."/>
            <person name="Kobayashi A."/>
            <person name="Lopez F."/>
            <person name="Lou Y."/>
            <person name="Martinez D."/>
            <person name="Medina C."/>
            <person name="Morgan J."/>
            <person name="Nandkeshwar R."/>
            <person name="Noonan J.P."/>
            <person name="Pitluck S."/>
            <person name="Pollard M."/>
            <person name="Predki P."/>
            <person name="Priest J."/>
            <person name="Ramirez L."/>
            <person name="Retterer J."/>
            <person name="Rodriguez A."/>
            <person name="Rogers S."/>
            <person name="Salamov A."/>
            <person name="Salazar A."/>
            <person name="Thayer N."/>
            <person name="Tice H."/>
            <person name="Tsai M."/>
            <person name="Ustaszewska A."/>
            <person name="Vo N."/>
            <person name="Wheeler J."/>
            <person name="Wu K."/>
            <person name="Yang J."/>
            <person name="Dickson M."/>
            <person name="Cheng J.-F."/>
            <person name="Eichler E.E."/>
            <person name="Olsen A."/>
            <person name="Pennacchio L.A."/>
            <person name="Rokhsar D.S."/>
            <person name="Richardson P."/>
            <person name="Lucas S.M."/>
            <person name="Myers R.M."/>
            <person name="Rubin E.M."/>
        </authorList>
    </citation>
    <scope>NUCLEOTIDE SEQUENCE [LARGE SCALE GENOMIC DNA]</scope>
</reference>
<reference key="6">
    <citation type="submission" date="2005-09" db="EMBL/GenBank/DDBJ databases">
        <authorList>
            <person name="Mural R.J."/>
            <person name="Istrail S."/>
            <person name="Sutton G.G."/>
            <person name="Florea L."/>
            <person name="Halpern A.L."/>
            <person name="Mobarry C.M."/>
            <person name="Lippert R."/>
            <person name="Walenz B."/>
            <person name="Shatkay H."/>
            <person name="Dew I."/>
            <person name="Miller J.R."/>
            <person name="Flanigan M.J."/>
            <person name="Edwards N.J."/>
            <person name="Bolanos R."/>
            <person name="Fasulo D."/>
            <person name="Halldorsson B.V."/>
            <person name="Hannenhalli S."/>
            <person name="Turner R."/>
            <person name="Yooseph S."/>
            <person name="Lu F."/>
            <person name="Nusskern D.R."/>
            <person name="Shue B.C."/>
            <person name="Zheng X.H."/>
            <person name="Zhong F."/>
            <person name="Delcher A.L."/>
            <person name="Huson D.H."/>
            <person name="Kravitz S.A."/>
            <person name="Mouchard L."/>
            <person name="Reinert K."/>
            <person name="Remington K.A."/>
            <person name="Clark A.G."/>
            <person name="Waterman M.S."/>
            <person name="Eichler E.E."/>
            <person name="Adams M.D."/>
            <person name="Hunkapiller M.W."/>
            <person name="Myers E.W."/>
            <person name="Venter J.C."/>
        </authorList>
    </citation>
    <scope>NUCLEOTIDE SEQUENCE [LARGE SCALE GENOMIC DNA]</scope>
</reference>
<reference key="7">
    <citation type="journal article" date="2004" name="Genome Res.">
        <title>The status, quality, and expansion of the NIH full-length cDNA project: the Mammalian Gene Collection (MGC).</title>
        <authorList>
            <consortium name="The MGC Project Team"/>
        </authorList>
    </citation>
    <scope>NUCLEOTIDE SEQUENCE [LARGE SCALE MRNA]</scope>
    <scope>VARIANT PRO-435</scope>
    <source>
        <tissue>Kidney</tissue>
    </source>
</reference>
<reference key="8">
    <citation type="journal article" date="2010" name="J. Biol. Chem.">
        <title>Golgi N-glycosyltransferases form both homo- and heterodimeric enzyme complexes in live cells.</title>
        <authorList>
            <person name="Hassinen A."/>
            <person name="Rivinoja A."/>
            <person name="Kauppila A."/>
            <person name="Kellokumpu S."/>
        </authorList>
    </citation>
    <scope>SUBCELLULAR LOCATION</scope>
</reference>
<reference key="9">
    <citation type="journal article" date="2014" name="J. Proteomics">
        <title>An enzyme assisted RP-RPLC approach for in-depth analysis of human liver phosphoproteome.</title>
        <authorList>
            <person name="Bian Y."/>
            <person name="Song C."/>
            <person name="Cheng K."/>
            <person name="Dong M."/>
            <person name="Wang F."/>
            <person name="Huang J."/>
            <person name="Sun D."/>
            <person name="Wang L."/>
            <person name="Ye M."/>
            <person name="Zou H."/>
        </authorList>
    </citation>
    <scope>IDENTIFICATION BY MASS SPECTROMETRY [LARGE SCALE ANALYSIS]</scope>
    <source>
        <tissue>Liver</tissue>
    </source>
</reference>
<reference key="10">
    <citation type="journal article" date="2018" name="Turk. J. Biol.">
        <title>Identification of IFITM3 and MGAT1 as novel interaction partners of BRI3 by yeast two-hybrid screening.</title>
        <authorList>
            <person name="Akiva I."/>
            <person name="Birguel Iyison N."/>
        </authorList>
    </citation>
    <scope>INTERACTION WITH BRI3</scope>
    <scope>SUBCELLULAR LOCATION</scope>
</reference>
<gene>
    <name type="primary">MGAT1</name>
    <name type="synonym">GGNT1</name>
    <name type="synonym">GLCT1</name>
    <name type="synonym">GLYT1</name>
    <name type="synonym">MGAT</name>
</gene>
<dbReference type="EC" id="2.4.1.101" evidence="6"/>
<dbReference type="EMBL" id="M55621">
    <property type="protein sequence ID" value="AAA52563.1"/>
    <property type="molecule type" value="mRNA"/>
</dbReference>
<dbReference type="EMBL" id="M61829">
    <property type="protein sequence ID" value="AAA75523.1"/>
    <property type="molecule type" value="Genomic_DNA"/>
</dbReference>
<dbReference type="EMBL" id="AK092256">
    <property type="protein sequence ID" value="BAG52510.1"/>
    <property type="molecule type" value="mRNA"/>
</dbReference>
<dbReference type="EMBL" id="AK094130">
    <property type="protein sequence ID" value="BAG52821.1"/>
    <property type="molecule type" value="mRNA"/>
</dbReference>
<dbReference type="EMBL" id="AK290769">
    <property type="protein sequence ID" value="BAF83458.1"/>
    <property type="molecule type" value="mRNA"/>
</dbReference>
<dbReference type="EMBL" id="CR456861">
    <property type="protein sequence ID" value="CAG33142.1"/>
    <property type="molecule type" value="mRNA"/>
</dbReference>
<dbReference type="EMBL" id="AC022413">
    <property type="status" value="NOT_ANNOTATED_CDS"/>
    <property type="molecule type" value="Genomic_DNA"/>
</dbReference>
<dbReference type="EMBL" id="CH471165">
    <property type="protein sequence ID" value="EAW53739.1"/>
    <property type="molecule type" value="Genomic_DNA"/>
</dbReference>
<dbReference type="EMBL" id="CH471165">
    <property type="protein sequence ID" value="EAW53740.1"/>
    <property type="molecule type" value="Genomic_DNA"/>
</dbReference>
<dbReference type="EMBL" id="CH471165">
    <property type="protein sequence ID" value="EAW53741.1"/>
    <property type="molecule type" value="Genomic_DNA"/>
</dbReference>
<dbReference type="EMBL" id="CH471165">
    <property type="protein sequence ID" value="EAW53742.1"/>
    <property type="molecule type" value="Genomic_DNA"/>
</dbReference>
<dbReference type="EMBL" id="CH471165">
    <property type="protein sequence ID" value="EAW53743.1"/>
    <property type="molecule type" value="Genomic_DNA"/>
</dbReference>
<dbReference type="EMBL" id="CH471165">
    <property type="protein sequence ID" value="EAW53744.1"/>
    <property type="molecule type" value="Genomic_DNA"/>
</dbReference>
<dbReference type="EMBL" id="BC003575">
    <property type="protein sequence ID" value="AAH03575.1"/>
    <property type="molecule type" value="mRNA"/>
</dbReference>
<dbReference type="CCDS" id="CCDS4458.1"/>
<dbReference type="PIR" id="JH0397">
    <property type="entry name" value="XUHUMB"/>
</dbReference>
<dbReference type="RefSeq" id="NP_001108089.1">
    <property type="nucleotide sequence ID" value="NM_001114617.2"/>
</dbReference>
<dbReference type="RefSeq" id="NP_001108090.1">
    <property type="nucleotide sequence ID" value="NM_001114618.1"/>
</dbReference>
<dbReference type="RefSeq" id="NP_001108091.1">
    <property type="nucleotide sequence ID" value="NM_001114619.1"/>
</dbReference>
<dbReference type="RefSeq" id="NP_001108092.1">
    <property type="nucleotide sequence ID" value="NM_001114620.1"/>
</dbReference>
<dbReference type="RefSeq" id="NP_001351306.1">
    <property type="nucleotide sequence ID" value="NM_001364377.2"/>
</dbReference>
<dbReference type="RefSeq" id="NP_001351308.1">
    <property type="nucleotide sequence ID" value="NM_001364379.2"/>
</dbReference>
<dbReference type="RefSeq" id="NP_001351309.1">
    <property type="nucleotide sequence ID" value="NM_001364380.2"/>
</dbReference>
<dbReference type="RefSeq" id="NP_001351310.1">
    <property type="nucleotide sequence ID" value="NM_001364381.2"/>
</dbReference>
<dbReference type="RefSeq" id="NP_001351311.1">
    <property type="nucleotide sequence ID" value="NM_001364382.2"/>
</dbReference>
<dbReference type="RefSeq" id="NP_001351312.1">
    <property type="nucleotide sequence ID" value="NM_001364383.2"/>
</dbReference>
<dbReference type="RefSeq" id="NP_001351313.1">
    <property type="nucleotide sequence ID" value="NM_001364384.2"/>
</dbReference>
<dbReference type="RefSeq" id="NP_001351314.1">
    <property type="nucleotide sequence ID" value="NM_001364385.2"/>
</dbReference>
<dbReference type="RefSeq" id="NP_001351315.1">
    <property type="nucleotide sequence ID" value="NM_001364386.2"/>
</dbReference>
<dbReference type="RefSeq" id="NP_001351316.1">
    <property type="nucleotide sequence ID" value="NM_001364387.2"/>
</dbReference>
<dbReference type="RefSeq" id="NP_001351317.1">
    <property type="nucleotide sequence ID" value="NM_001364388.2"/>
</dbReference>
<dbReference type="RefSeq" id="NP_001351318.1">
    <property type="nucleotide sequence ID" value="NM_001364389.2"/>
</dbReference>
<dbReference type="RefSeq" id="NP_001351319.1">
    <property type="nucleotide sequence ID" value="NM_001364390.2"/>
</dbReference>
<dbReference type="RefSeq" id="NP_001351320.1">
    <property type="nucleotide sequence ID" value="NM_001364391.2"/>
</dbReference>
<dbReference type="RefSeq" id="NP_001351321.1">
    <property type="nucleotide sequence ID" value="NM_001364392.2"/>
</dbReference>
<dbReference type="RefSeq" id="NP_001351322.1">
    <property type="nucleotide sequence ID" value="NM_001364393.2"/>
</dbReference>
<dbReference type="RefSeq" id="NP_001351323.1">
    <property type="nucleotide sequence ID" value="NM_001364394.2"/>
</dbReference>
<dbReference type="RefSeq" id="NP_001351324.1">
    <property type="nucleotide sequence ID" value="NM_001364395.2"/>
</dbReference>
<dbReference type="RefSeq" id="NP_002397.2">
    <property type="nucleotide sequence ID" value="NM_002406.4"/>
</dbReference>
<dbReference type="RefSeq" id="XP_005265972.1">
    <property type="nucleotide sequence ID" value="XM_005265915.1"/>
</dbReference>
<dbReference type="RefSeq" id="XP_005265973.1">
    <property type="nucleotide sequence ID" value="XM_005265916.1"/>
</dbReference>
<dbReference type="RefSeq" id="XP_006714929.1">
    <property type="nucleotide sequence ID" value="XM_006714866.1"/>
</dbReference>
<dbReference type="RefSeq" id="XP_011532861.1">
    <property type="nucleotide sequence ID" value="XM_011534559.1"/>
</dbReference>
<dbReference type="RefSeq" id="XP_011532862.1">
    <property type="nucleotide sequence ID" value="XM_011534560.1"/>
</dbReference>
<dbReference type="RefSeq" id="XP_011532863.1">
    <property type="nucleotide sequence ID" value="XM_011534561.1"/>
</dbReference>
<dbReference type="RefSeq" id="XP_011532864.1">
    <property type="nucleotide sequence ID" value="XM_011534562.1"/>
</dbReference>
<dbReference type="RefSeq" id="XP_011532865.1">
    <property type="nucleotide sequence ID" value="XM_011534563.2"/>
</dbReference>
<dbReference type="RefSeq" id="XP_016864975.1">
    <property type="nucleotide sequence ID" value="XM_017009486.1"/>
</dbReference>
<dbReference type="RefSeq" id="XP_016864976.1">
    <property type="nucleotide sequence ID" value="XM_017009487.1"/>
</dbReference>
<dbReference type="RefSeq" id="XP_047273177.1">
    <property type="nucleotide sequence ID" value="XM_047417221.1"/>
</dbReference>
<dbReference type="RefSeq" id="XP_047273178.1">
    <property type="nucleotide sequence ID" value="XM_047417222.1"/>
</dbReference>
<dbReference type="RefSeq" id="XP_047273179.1">
    <property type="nucleotide sequence ID" value="XM_047417223.1"/>
</dbReference>
<dbReference type="RefSeq" id="XP_047273180.1">
    <property type="nucleotide sequence ID" value="XM_047417224.1"/>
</dbReference>
<dbReference type="RefSeq" id="XP_047273181.1">
    <property type="nucleotide sequence ID" value="XM_047417225.1"/>
</dbReference>
<dbReference type="RefSeq" id="XP_047273182.1">
    <property type="nucleotide sequence ID" value="XM_047417226.1"/>
</dbReference>
<dbReference type="RefSeq" id="XP_047273183.1">
    <property type="nucleotide sequence ID" value="XM_047417227.1"/>
</dbReference>
<dbReference type="RefSeq" id="XP_047273184.1">
    <property type="nucleotide sequence ID" value="XM_047417228.1"/>
</dbReference>
<dbReference type="RefSeq" id="XP_047273185.1">
    <property type="nucleotide sequence ID" value="XM_047417229.1"/>
</dbReference>
<dbReference type="SMR" id="P26572"/>
<dbReference type="BioGRID" id="110401">
    <property type="interactions" value="40"/>
</dbReference>
<dbReference type="CORUM" id="P26572"/>
<dbReference type="FunCoup" id="P26572">
    <property type="interactions" value="1347"/>
</dbReference>
<dbReference type="IntAct" id="P26572">
    <property type="interactions" value="29"/>
</dbReference>
<dbReference type="MINT" id="P26572"/>
<dbReference type="STRING" id="9606.ENSP00000332073"/>
<dbReference type="BindingDB" id="P26572"/>
<dbReference type="ChEMBL" id="CHEMBL2375207"/>
<dbReference type="DrugBank" id="DB03397">
    <property type="generic name" value="Uridine-Diphosphate-N-Acetylglucosamine"/>
</dbReference>
<dbReference type="CAZy" id="GT13">
    <property type="family name" value="Glycosyltransferase Family 13"/>
</dbReference>
<dbReference type="GlyCosmos" id="P26572">
    <property type="glycosylation" value="1 site, 1 glycan"/>
</dbReference>
<dbReference type="GlyGen" id="P26572">
    <property type="glycosylation" value="6 sites, 2 O-linked glycans (5 sites)"/>
</dbReference>
<dbReference type="iPTMnet" id="P26572"/>
<dbReference type="PhosphoSitePlus" id="P26572"/>
<dbReference type="BioMuta" id="MGAT1"/>
<dbReference type="DMDM" id="311033399"/>
<dbReference type="jPOST" id="P26572"/>
<dbReference type="MassIVE" id="P26572"/>
<dbReference type="PaxDb" id="9606-ENSP00000404718"/>
<dbReference type="PeptideAtlas" id="P26572"/>
<dbReference type="ProteomicsDB" id="54352"/>
<dbReference type="Pumba" id="P26572"/>
<dbReference type="Antibodypedia" id="17878">
    <property type="antibodies" value="279 antibodies from 31 providers"/>
</dbReference>
<dbReference type="DNASU" id="4245"/>
<dbReference type="Ensembl" id="ENST00000307826.5">
    <property type="protein sequence ID" value="ENSP00000311888.4"/>
    <property type="gene ID" value="ENSG00000131446.17"/>
</dbReference>
<dbReference type="Ensembl" id="ENST00000333055.8">
    <property type="protein sequence ID" value="ENSP00000332073.3"/>
    <property type="gene ID" value="ENSG00000131446.17"/>
</dbReference>
<dbReference type="Ensembl" id="ENST00000393340.7">
    <property type="protein sequence ID" value="ENSP00000377010.3"/>
    <property type="gene ID" value="ENSG00000131446.17"/>
</dbReference>
<dbReference type="Ensembl" id="ENST00000427865.2">
    <property type="protein sequence ID" value="ENSP00000402838.2"/>
    <property type="gene ID" value="ENSG00000131446.17"/>
</dbReference>
<dbReference type="Ensembl" id="ENST00000446023.6">
    <property type="protein sequence ID" value="ENSP00000404718.2"/>
    <property type="gene ID" value="ENSG00000131446.17"/>
</dbReference>
<dbReference type="GeneID" id="4245"/>
<dbReference type="KEGG" id="hsa:4245"/>
<dbReference type="MANE-Select" id="ENST00000307826.5">
    <property type="protein sequence ID" value="ENSP00000311888.4"/>
    <property type="RefSeq nucleotide sequence ID" value="NM_002406.4"/>
    <property type="RefSeq protein sequence ID" value="NP_002397.2"/>
</dbReference>
<dbReference type="UCSC" id="uc003mmg.5">
    <property type="organism name" value="human"/>
</dbReference>
<dbReference type="AGR" id="HGNC:7044"/>
<dbReference type="CTD" id="4245"/>
<dbReference type="DisGeNET" id="4245"/>
<dbReference type="GeneCards" id="MGAT1"/>
<dbReference type="HGNC" id="HGNC:7044">
    <property type="gene designation" value="MGAT1"/>
</dbReference>
<dbReference type="HPA" id="ENSG00000131446">
    <property type="expression patterns" value="Low tissue specificity"/>
</dbReference>
<dbReference type="MalaCards" id="MGAT1"/>
<dbReference type="MIM" id="160995">
    <property type="type" value="gene"/>
</dbReference>
<dbReference type="neXtProt" id="NX_P26572"/>
<dbReference type="OpenTargets" id="ENSG00000131446"/>
<dbReference type="PharmGKB" id="PA30779"/>
<dbReference type="VEuPathDB" id="HostDB:ENSG00000131446"/>
<dbReference type="eggNOG" id="KOG1413">
    <property type="taxonomic scope" value="Eukaryota"/>
</dbReference>
<dbReference type="GeneTree" id="ENSGT00530000063632"/>
<dbReference type="HOGENOM" id="CLU_022150_0_0_1"/>
<dbReference type="InParanoid" id="P26572"/>
<dbReference type="OMA" id="KGYDLSW"/>
<dbReference type="OrthoDB" id="440755at2759"/>
<dbReference type="PAN-GO" id="P26572">
    <property type="GO annotations" value="3 GO annotations based on evolutionary models"/>
</dbReference>
<dbReference type="PhylomeDB" id="P26572"/>
<dbReference type="TreeFam" id="TF320555"/>
<dbReference type="BioCyc" id="MetaCyc:HS05528-MONOMER"/>
<dbReference type="BRENDA" id="2.4.1.101">
    <property type="organism ID" value="2681"/>
</dbReference>
<dbReference type="PathwayCommons" id="P26572"/>
<dbReference type="Reactome" id="R-HSA-964739">
    <property type="pathway name" value="N-glycan trimming and elongation in the cis-Golgi"/>
</dbReference>
<dbReference type="Reactome" id="R-HSA-9683686">
    <property type="pathway name" value="Maturation of spike protein"/>
</dbReference>
<dbReference type="Reactome" id="R-HSA-9694548">
    <property type="pathway name" value="Maturation of spike protein"/>
</dbReference>
<dbReference type="SignaLink" id="P26572"/>
<dbReference type="UniPathway" id="UPA00378"/>
<dbReference type="BioGRID-ORCS" id="4245">
    <property type="hits" value="200 hits in 1173 CRISPR screens"/>
</dbReference>
<dbReference type="ChiTaRS" id="MGAT1">
    <property type="organism name" value="human"/>
</dbReference>
<dbReference type="GeneWiki" id="MGAT1"/>
<dbReference type="GenomeRNAi" id="4245"/>
<dbReference type="Pharos" id="P26572">
    <property type="development level" value="Tchem"/>
</dbReference>
<dbReference type="PRO" id="PR:P26572"/>
<dbReference type="Proteomes" id="UP000005640">
    <property type="component" value="Chromosome 5"/>
</dbReference>
<dbReference type="RNAct" id="P26572">
    <property type="molecule type" value="protein"/>
</dbReference>
<dbReference type="Bgee" id="ENSG00000131446">
    <property type="expression patterns" value="Expressed in monocyte and 204 other cell types or tissues"/>
</dbReference>
<dbReference type="ExpressionAtlas" id="P26572">
    <property type="expression patterns" value="baseline and differential"/>
</dbReference>
<dbReference type="GO" id="GO:0033116">
    <property type="term" value="C:endoplasmic reticulum-Golgi intermediate compartment membrane"/>
    <property type="evidence" value="ECO:0000304"/>
    <property type="project" value="Reactome"/>
</dbReference>
<dbReference type="GO" id="GO:0070062">
    <property type="term" value="C:extracellular exosome"/>
    <property type="evidence" value="ECO:0007005"/>
    <property type="project" value="UniProtKB"/>
</dbReference>
<dbReference type="GO" id="GO:1903561">
    <property type="term" value="C:extracellular vesicle"/>
    <property type="evidence" value="ECO:0007005"/>
    <property type="project" value="UniProtKB"/>
</dbReference>
<dbReference type="GO" id="GO:0005794">
    <property type="term" value="C:Golgi apparatus"/>
    <property type="evidence" value="ECO:0000318"/>
    <property type="project" value="GO_Central"/>
</dbReference>
<dbReference type="GO" id="GO:0000139">
    <property type="term" value="C:Golgi membrane"/>
    <property type="evidence" value="ECO:0000314"/>
    <property type="project" value="UniProtKB"/>
</dbReference>
<dbReference type="GO" id="GO:0016020">
    <property type="term" value="C:membrane"/>
    <property type="evidence" value="ECO:0007005"/>
    <property type="project" value="UniProtKB"/>
</dbReference>
<dbReference type="GO" id="GO:0048471">
    <property type="term" value="C:perinuclear region of cytoplasm"/>
    <property type="evidence" value="ECO:0007669"/>
    <property type="project" value="UniProtKB-SubCell"/>
</dbReference>
<dbReference type="GO" id="GO:0008375">
    <property type="term" value="F:acetylglucosaminyltransferase activity"/>
    <property type="evidence" value="ECO:0000304"/>
    <property type="project" value="Reactome"/>
</dbReference>
<dbReference type="GO" id="GO:0003827">
    <property type="term" value="F:alpha-1,3-mannosylglycoprotein 2-beta-N-acetylglucosaminyltransferase activity"/>
    <property type="evidence" value="ECO:0000314"/>
    <property type="project" value="UniProtKB"/>
</dbReference>
<dbReference type="GO" id="GO:0030145">
    <property type="term" value="F:manganese ion binding"/>
    <property type="evidence" value="ECO:0000314"/>
    <property type="project" value="UniProtKB"/>
</dbReference>
<dbReference type="GO" id="GO:0001701">
    <property type="term" value="P:in utero embryonic development"/>
    <property type="evidence" value="ECO:0007669"/>
    <property type="project" value="Ensembl"/>
</dbReference>
<dbReference type="GO" id="GO:0006487">
    <property type="term" value="P:protein N-linked glycosylation"/>
    <property type="evidence" value="ECO:0000318"/>
    <property type="project" value="GO_Central"/>
</dbReference>
<dbReference type="GO" id="GO:0018279">
    <property type="term" value="P:protein N-linked glycosylation via asparagine"/>
    <property type="evidence" value="ECO:0000314"/>
    <property type="project" value="UniProtKB"/>
</dbReference>
<dbReference type="GO" id="GO:0006049">
    <property type="term" value="P:UDP-N-acetylglucosamine catabolic process"/>
    <property type="evidence" value="ECO:0007669"/>
    <property type="project" value="Ensembl"/>
</dbReference>
<dbReference type="GO" id="GO:0019082">
    <property type="term" value="P:viral protein processing"/>
    <property type="evidence" value="ECO:0000304"/>
    <property type="project" value="Reactome"/>
</dbReference>
<dbReference type="CDD" id="cd02514">
    <property type="entry name" value="GT13_GLCNAC-TI"/>
    <property type="match status" value="1"/>
</dbReference>
<dbReference type="FunFam" id="3.90.550.10:FF:000055">
    <property type="entry name" value="Alpha-1,3-mannosyl-glycoprotein 2-beta-N-acetylglucosaminyltransferase"/>
    <property type="match status" value="1"/>
</dbReference>
<dbReference type="FunFam" id="3.10.180.20:FF:000001">
    <property type="entry name" value="alpha-1,3-mannosyl-glycoprotein 2-beta-N-acetylglucosaminyltransferase"/>
    <property type="match status" value="1"/>
</dbReference>
<dbReference type="Gene3D" id="3.10.180.20">
    <property type="entry name" value="N-Acetylglucosaminyltransferase I, Domain 2"/>
    <property type="match status" value="1"/>
</dbReference>
<dbReference type="Gene3D" id="3.90.550.10">
    <property type="entry name" value="Spore Coat Polysaccharide Biosynthesis Protein SpsA, Chain A"/>
    <property type="match status" value="1"/>
</dbReference>
<dbReference type="InterPro" id="IPR004139">
    <property type="entry name" value="Glyco_trans_13"/>
</dbReference>
<dbReference type="InterPro" id="IPR052261">
    <property type="entry name" value="Glycosyltransferase_13"/>
</dbReference>
<dbReference type="InterPro" id="IPR029044">
    <property type="entry name" value="Nucleotide-diphossugar_trans"/>
</dbReference>
<dbReference type="PANTHER" id="PTHR10468:SF0">
    <property type="entry name" value="ALPHA-1,3-MANNOSYL-GLYCOPROTEIN 2-BETA-N-ACETYLGLUCOSAMINYLTRANSFERASE"/>
    <property type="match status" value="1"/>
</dbReference>
<dbReference type="PANTHER" id="PTHR10468">
    <property type="entry name" value="PROTEIN O-LINKED-MANNOSE BETA-1,2-N-ACETYLGLUCOSAMINYLTRANSFERASE 1/ALPHA-1,3-MANNOSYL-GLYCOPROTEIN 2-BETA-N-ACETYLGLUCOSAMINYLTRANSFERASE"/>
    <property type="match status" value="1"/>
</dbReference>
<dbReference type="Pfam" id="PF03071">
    <property type="entry name" value="GNT-I"/>
    <property type="match status" value="1"/>
</dbReference>
<dbReference type="SUPFAM" id="SSF53448">
    <property type="entry name" value="Nucleotide-diphospho-sugar transferases"/>
    <property type="match status" value="1"/>
</dbReference>
<protein>
    <recommendedName>
        <fullName>Alpha-1,3-mannosyl-glycoprotein 2-beta-N-acetylglucosaminyltransferase</fullName>
        <ecNumber evidence="6">2.4.1.101</ecNumber>
    </recommendedName>
    <alternativeName>
        <fullName evidence="11">N-glycosyl-oligosaccharide-glycoprotein N-acetylglucosaminyltransferase I</fullName>
        <shortName>GNT-I</shortName>
        <shortName evidence="11">GlcNAc-T I</shortName>
    </alternativeName>
</protein>
<name>MGAT1_HUMAN</name>